<sequence>DKRTKKVGIVGKYGVRYGASLRKTIKKIEISQHAKYNCNFCGKDSLKRKAAGIWECKACKKVVAGGAYVCSTTAATTIRAAIRRLRDAHES</sequence>
<feature type="chain" id="PRO_0000139829" description="Large ribosomal subunit protein eL43">
    <location>
        <begin position="1" status="less than"/>
        <end position="91"/>
    </location>
</feature>
<feature type="zinc finger region" description="C4-type">
    <location>
        <begin position="38"/>
        <end position="59"/>
    </location>
</feature>
<feature type="non-terminal residue">
    <location>
        <position position="1"/>
    </location>
</feature>
<accession>O17307</accession>
<organism>
    <name type="scientific">Schistosoma mansoni</name>
    <name type="common">Blood fluke</name>
    <dbReference type="NCBI Taxonomy" id="6183"/>
    <lineage>
        <taxon>Eukaryota</taxon>
        <taxon>Metazoa</taxon>
        <taxon>Spiralia</taxon>
        <taxon>Lophotrochozoa</taxon>
        <taxon>Platyhelminthes</taxon>
        <taxon>Trematoda</taxon>
        <taxon>Digenea</taxon>
        <taxon>Strigeidida</taxon>
        <taxon>Schistosomatoidea</taxon>
        <taxon>Schistosomatidae</taxon>
        <taxon>Schistosoma</taxon>
    </lineage>
</organism>
<dbReference type="EMBL" id="AF025539">
    <property type="protein sequence ID" value="AAB81969.1"/>
    <property type="molecule type" value="mRNA"/>
</dbReference>
<dbReference type="SMR" id="O17307"/>
<dbReference type="FunCoup" id="O17307">
    <property type="interactions" value="636"/>
</dbReference>
<dbReference type="STRING" id="6183.O17307"/>
<dbReference type="eggNOG" id="KOG0402">
    <property type="taxonomic scope" value="Eukaryota"/>
</dbReference>
<dbReference type="HOGENOM" id="CLU_141199_1_0_1"/>
<dbReference type="InParanoid" id="O17307"/>
<dbReference type="Proteomes" id="UP000008854">
    <property type="component" value="Unassembled WGS sequence"/>
</dbReference>
<dbReference type="GO" id="GO:1990904">
    <property type="term" value="C:ribonucleoprotein complex"/>
    <property type="evidence" value="ECO:0007669"/>
    <property type="project" value="UniProtKB-KW"/>
</dbReference>
<dbReference type="GO" id="GO:0005840">
    <property type="term" value="C:ribosome"/>
    <property type="evidence" value="ECO:0007669"/>
    <property type="project" value="UniProtKB-KW"/>
</dbReference>
<dbReference type="GO" id="GO:0003735">
    <property type="term" value="F:structural constituent of ribosome"/>
    <property type="evidence" value="ECO:0007669"/>
    <property type="project" value="InterPro"/>
</dbReference>
<dbReference type="GO" id="GO:0008270">
    <property type="term" value="F:zinc ion binding"/>
    <property type="evidence" value="ECO:0007669"/>
    <property type="project" value="UniProtKB-KW"/>
</dbReference>
<dbReference type="GO" id="GO:0006412">
    <property type="term" value="P:translation"/>
    <property type="evidence" value="ECO:0007669"/>
    <property type="project" value="InterPro"/>
</dbReference>
<dbReference type="FunFam" id="2.20.25.30:FF:000002">
    <property type="entry name" value="60S ribosomal protein L37a"/>
    <property type="match status" value="1"/>
</dbReference>
<dbReference type="Gene3D" id="2.20.25.30">
    <property type="match status" value="1"/>
</dbReference>
<dbReference type="HAMAP" id="MF_00327">
    <property type="entry name" value="Ribosomal_eL43"/>
    <property type="match status" value="1"/>
</dbReference>
<dbReference type="InterPro" id="IPR011331">
    <property type="entry name" value="Ribosomal_eL37/eL43"/>
</dbReference>
<dbReference type="InterPro" id="IPR002674">
    <property type="entry name" value="Ribosomal_eL43"/>
</dbReference>
<dbReference type="InterPro" id="IPR050522">
    <property type="entry name" value="Ribosomal_protein_eL43"/>
</dbReference>
<dbReference type="InterPro" id="IPR011332">
    <property type="entry name" value="Ribosomal_zn-bd"/>
</dbReference>
<dbReference type="NCBIfam" id="TIGR00280">
    <property type="entry name" value="eL43_euk_arch"/>
    <property type="match status" value="1"/>
</dbReference>
<dbReference type="NCBIfam" id="NF003058">
    <property type="entry name" value="PRK03976.1"/>
    <property type="match status" value="1"/>
</dbReference>
<dbReference type="PANTHER" id="PTHR48129">
    <property type="entry name" value="60S RIBOSOMAL PROTEIN L37A"/>
    <property type="match status" value="1"/>
</dbReference>
<dbReference type="PANTHER" id="PTHR48129:SF1">
    <property type="entry name" value="LARGE RIBOSOMAL SUBUNIT PROTEIN EL43"/>
    <property type="match status" value="1"/>
</dbReference>
<dbReference type="Pfam" id="PF01780">
    <property type="entry name" value="Ribosomal_L37ae"/>
    <property type="match status" value="1"/>
</dbReference>
<dbReference type="SUPFAM" id="SSF57829">
    <property type="entry name" value="Zn-binding ribosomal proteins"/>
    <property type="match status" value="1"/>
</dbReference>
<name>RL37A_SCHMA</name>
<comment type="similarity">
    <text evidence="1">Belongs to the eukaryotic ribosomal protein eL43 family.</text>
</comment>
<protein>
    <recommendedName>
        <fullName evidence="1">Large ribosomal subunit protein eL43</fullName>
    </recommendedName>
    <alternativeName>
        <fullName>60S ribosomal protein L37a</fullName>
    </alternativeName>
</protein>
<reference key="1">
    <citation type="submission" date="1997-09" db="EMBL/GenBank/DDBJ databases">
        <authorList>
            <person name="Ragaa M.M."/>
            <person name="Shalaby K.A."/>
            <person name="Mohamed M.M."/>
            <person name="Karim A.M."/>
        </authorList>
    </citation>
    <scope>NUCLEOTIDE SEQUENCE [MRNA]</scope>
    <source>
        <strain>NMRI</strain>
    </source>
</reference>
<evidence type="ECO:0000305" key="1"/>
<keyword id="KW-0479">Metal-binding</keyword>
<keyword id="KW-1185">Reference proteome</keyword>
<keyword id="KW-0687">Ribonucleoprotein</keyword>
<keyword id="KW-0689">Ribosomal protein</keyword>
<keyword id="KW-0862">Zinc</keyword>
<keyword id="KW-0863">Zinc-finger</keyword>
<proteinExistence type="evidence at transcript level"/>